<keyword id="KW-0150">Chloroplast</keyword>
<keyword id="KW-0378">Hydrolase</keyword>
<keyword id="KW-0934">Plastid</keyword>
<keyword id="KW-0645">Protease</keyword>
<keyword id="KW-1185">Reference proteome</keyword>
<keyword id="KW-0720">Serine protease</keyword>
<protein>
    <recommendedName>
        <fullName evidence="1">ATP-dependent Clp protease proteolytic subunit</fullName>
        <ecNumber evidence="1">3.4.21.92</ecNumber>
    </recommendedName>
    <alternativeName>
        <fullName evidence="1">Endopeptidase Clp</fullName>
    </alternativeName>
</protein>
<feature type="chain" id="PRO_0000275306" description="ATP-dependent Clp protease proteolytic subunit">
    <location>
        <begin position="1"/>
        <end position="196"/>
    </location>
</feature>
<feature type="active site" description="Nucleophile" evidence="1">
    <location>
        <position position="101"/>
    </location>
</feature>
<feature type="active site" evidence="1">
    <location>
        <position position="126"/>
    </location>
</feature>
<dbReference type="EC" id="3.4.21.92" evidence="1"/>
<dbReference type="EMBL" id="DQ424856">
    <property type="protein sequence ID" value="ABE47558.1"/>
    <property type="molecule type" value="Genomic_DNA"/>
</dbReference>
<dbReference type="RefSeq" id="YP_567102.1">
    <property type="nucleotide sequence ID" value="NC_007957.1"/>
</dbReference>
<dbReference type="SMR" id="Q0ZIZ4"/>
<dbReference type="FunCoup" id="Q0ZIZ4">
    <property type="interactions" value="9"/>
</dbReference>
<dbReference type="STRING" id="29760.Q0ZIZ4"/>
<dbReference type="MEROPS" id="S14.002"/>
<dbReference type="GeneID" id="4025124"/>
<dbReference type="KEGG" id="vvi:4025124"/>
<dbReference type="InParanoid" id="Q0ZIZ4"/>
<dbReference type="OrthoDB" id="923401at71240"/>
<dbReference type="Proteomes" id="UP000009183">
    <property type="component" value="Chloroplast"/>
</dbReference>
<dbReference type="ExpressionAtlas" id="Q0ZIZ4">
    <property type="expression patterns" value="baseline and differential"/>
</dbReference>
<dbReference type="GO" id="GO:0009570">
    <property type="term" value="C:chloroplast stroma"/>
    <property type="evidence" value="ECO:0007669"/>
    <property type="project" value="UniProtKB-SubCell"/>
</dbReference>
<dbReference type="GO" id="GO:0009368">
    <property type="term" value="C:endopeptidase Clp complex"/>
    <property type="evidence" value="ECO:0000318"/>
    <property type="project" value="GO_Central"/>
</dbReference>
<dbReference type="GO" id="GO:0004176">
    <property type="term" value="F:ATP-dependent peptidase activity"/>
    <property type="evidence" value="ECO:0000318"/>
    <property type="project" value="GO_Central"/>
</dbReference>
<dbReference type="GO" id="GO:0051117">
    <property type="term" value="F:ATPase binding"/>
    <property type="evidence" value="ECO:0000318"/>
    <property type="project" value="GO_Central"/>
</dbReference>
<dbReference type="GO" id="GO:0004252">
    <property type="term" value="F:serine-type endopeptidase activity"/>
    <property type="evidence" value="ECO:0000318"/>
    <property type="project" value="GO_Central"/>
</dbReference>
<dbReference type="GO" id="GO:0006515">
    <property type="term" value="P:protein quality control for misfolded or incompletely synthesized proteins"/>
    <property type="evidence" value="ECO:0000318"/>
    <property type="project" value="GO_Central"/>
</dbReference>
<dbReference type="CDD" id="cd07017">
    <property type="entry name" value="S14_ClpP_2"/>
    <property type="match status" value="1"/>
</dbReference>
<dbReference type="FunFam" id="3.90.226.10:FF:000006">
    <property type="entry name" value="ATP-dependent Clp protease proteolytic subunit"/>
    <property type="match status" value="1"/>
</dbReference>
<dbReference type="Gene3D" id="3.90.226.10">
    <property type="entry name" value="2-enoyl-CoA Hydratase, Chain A, domain 1"/>
    <property type="match status" value="1"/>
</dbReference>
<dbReference type="HAMAP" id="MF_00444">
    <property type="entry name" value="ClpP"/>
    <property type="match status" value="1"/>
</dbReference>
<dbReference type="InterPro" id="IPR001907">
    <property type="entry name" value="ClpP"/>
</dbReference>
<dbReference type="InterPro" id="IPR029045">
    <property type="entry name" value="ClpP/crotonase-like_dom_sf"/>
</dbReference>
<dbReference type="InterPro" id="IPR023562">
    <property type="entry name" value="ClpP/TepA"/>
</dbReference>
<dbReference type="InterPro" id="IPR033135">
    <property type="entry name" value="ClpP_His_AS"/>
</dbReference>
<dbReference type="InterPro" id="IPR018215">
    <property type="entry name" value="ClpP_Ser_AS"/>
</dbReference>
<dbReference type="PANTHER" id="PTHR10381">
    <property type="entry name" value="ATP-DEPENDENT CLP PROTEASE PROTEOLYTIC SUBUNIT"/>
    <property type="match status" value="1"/>
</dbReference>
<dbReference type="PANTHER" id="PTHR10381:SF15">
    <property type="entry name" value="CHLOROPLASTIC ATP-DEPENDENT CLP PROTEASE PROTEOLYTIC SUBUNIT 1"/>
    <property type="match status" value="1"/>
</dbReference>
<dbReference type="Pfam" id="PF00574">
    <property type="entry name" value="CLP_protease"/>
    <property type="match status" value="1"/>
</dbReference>
<dbReference type="PRINTS" id="PR00127">
    <property type="entry name" value="CLPPROTEASEP"/>
</dbReference>
<dbReference type="SUPFAM" id="SSF52096">
    <property type="entry name" value="ClpP/crotonase"/>
    <property type="match status" value="1"/>
</dbReference>
<dbReference type="PROSITE" id="PS00382">
    <property type="entry name" value="CLP_PROTEASE_HIS"/>
    <property type="match status" value="1"/>
</dbReference>
<dbReference type="PROSITE" id="PS00381">
    <property type="entry name" value="CLP_PROTEASE_SER"/>
    <property type="match status" value="1"/>
</dbReference>
<proteinExistence type="inferred from homology"/>
<gene>
    <name evidence="1" type="primary">clpP</name>
</gene>
<sequence>MPIGVPKVPFRNPGEDDISWIDVYNRLYRERLLFLGQEVESEISNQLIGLMIYLSIEDENKDLYFFINSPGGWVLPGIAIYDTMQFVPPEVHTICLGLAASMGSFILVGGTITKRLAFPHARVMIHQPAAAFYEAQAGEFVMEAEELLKLREIITKVYVQRTGKPLWVVSEDLERDVFMSATEAQTHGIVDLVAVQ</sequence>
<reference key="1">
    <citation type="journal article" date="2006" name="BMC Evol. Biol.">
        <title>Phylogenetic analyses of Vitis (Vitaceae) based on complete chloroplast genome sequences: effects of taxon sampling and phylogenetic methods on resolving relationships among rosids.</title>
        <authorList>
            <person name="Jansen R.K."/>
            <person name="Kaittanis C."/>
            <person name="Lee S.-B."/>
            <person name="Saski C."/>
            <person name="Tomkins J."/>
            <person name="Alverson A.J."/>
            <person name="Daniell H."/>
        </authorList>
    </citation>
    <scope>NUCLEOTIDE SEQUENCE [LARGE SCALE GENOMIC DNA]</scope>
    <source>
        <strain>cv. Maxxa</strain>
    </source>
</reference>
<evidence type="ECO:0000255" key="1">
    <source>
        <dbReference type="HAMAP-Rule" id="MF_00444"/>
    </source>
</evidence>
<name>CLPP_VITVI</name>
<organism>
    <name type="scientific">Vitis vinifera</name>
    <name type="common">Grape</name>
    <dbReference type="NCBI Taxonomy" id="29760"/>
    <lineage>
        <taxon>Eukaryota</taxon>
        <taxon>Viridiplantae</taxon>
        <taxon>Streptophyta</taxon>
        <taxon>Embryophyta</taxon>
        <taxon>Tracheophyta</taxon>
        <taxon>Spermatophyta</taxon>
        <taxon>Magnoliopsida</taxon>
        <taxon>eudicotyledons</taxon>
        <taxon>Gunneridae</taxon>
        <taxon>Pentapetalae</taxon>
        <taxon>rosids</taxon>
        <taxon>Vitales</taxon>
        <taxon>Vitaceae</taxon>
        <taxon>Viteae</taxon>
        <taxon>Vitis</taxon>
    </lineage>
</organism>
<geneLocation type="chloroplast"/>
<accession>Q0ZIZ4</accession>
<comment type="function">
    <text evidence="1">Cleaves peptides in various proteins in a process that requires ATP hydrolysis. Has a chymotrypsin-like activity. Plays a major role in the degradation of misfolded proteins.</text>
</comment>
<comment type="catalytic activity">
    <reaction evidence="1">
        <text>Hydrolysis of proteins to small peptides in the presence of ATP and magnesium. alpha-casein is the usual test substrate. In the absence of ATP, only oligopeptides shorter than five residues are hydrolyzed (such as succinyl-Leu-Tyr-|-NHMec, and Leu-Tyr-Leu-|-Tyr-Trp, in which cleavage of the -Tyr-|-Leu- and -Tyr-|-Trp bonds also occurs).</text>
        <dbReference type="EC" id="3.4.21.92"/>
    </reaction>
</comment>
<comment type="subunit">
    <text>Component of the chloroplastic Clp protease core complex.</text>
</comment>
<comment type="subcellular location">
    <subcellularLocation>
        <location evidence="1">Plastid</location>
        <location evidence="1">Chloroplast stroma</location>
    </subcellularLocation>
</comment>
<comment type="similarity">
    <text evidence="1">Belongs to the peptidase S14 family.</text>
</comment>